<comment type="function">
    <text evidence="1">Forms part of the ribosomal stalk which helps the ribosome interact with GTP-bound translation factors.</text>
</comment>
<comment type="subunit">
    <text evidence="1">Part of the ribosomal stalk of the 50S ribosomal subunit. Interacts with L10 and the large rRNA to form the base of the stalk. L10 forms an elongated spine to which L12 dimers bind in a sequential fashion forming a multimeric L10(L12)X complex.</text>
</comment>
<comment type="PTM">
    <text evidence="1">One or more lysine residues are methylated.</text>
</comment>
<comment type="similarity">
    <text evidence="1">Belongs to the universal ribosomal protein uL11 family.</text>
</comment>
<proteinExistence type="inferred from homology"/>
<sequence length="142" mass="14920">MPPKKKLAAVVKVQLPAGQATPAPPVGTALGPHGVNIMEFCKQYNAATESQRGNIIPVEISIYEDRSFSFVTKTPPAPALILKAAGLEKGASTPSRSVAGSITRDQVREIAQTKLPDLNTTSLEAAEKIIAGTARSMGIEVK</sequence>
<organism>
    <name type="scientific">Thermobifida fusca (strain YX)</name>
    <dbReference type="NCBI Taxonomy" id="269800"/>
    <lineage>
        <taxon>Bacteria</taxon>
        <taxon>Bacillati</taxon>
        <taxon>Actinomycetota</taxon>
        <taxon>Actinomycetes</taxon>
        <taxon>Streptosporangiales</taxon>
        <taxon>Nocardiopsidaceae</taxon>
        <taxon>Thermobifida</taxon>
    </lineage>
</organism>
<accession>Q47LI1</accession>
<feature type="chain" id="PRO_0000258234" description="Large ribosomal subunit protein uL11">
    <location>
        <begin position="1"/>
        <end position="142"/>
    </location>
</feature>
<reference key="1">
    <citation type="journal article" date="2007" name="J. Bacteriol.">
        <title>Genome sequence and analysis of the soil cellulolytic actinomycete Thermobifida fusca YX.</title>
        <authorList>
            <person name="Lykidis A."/>
            <person name="Mavromatis K."/>
            <person name="Ivanova N."/>
            <person name="Anderson I."/>
            <person name="Land M."/>
            <person name="DiBartolo G."/>
            <person name="Martinez M."/>
            <person name="Lapidus A."/>
            <person name="Lucas S."/>
            <person name="Copeland A."/>
            <person name="Richardson P."/>
            <person name="Wilson D.B."/>
            <person name="Kyrpides N."/>
        </authorList>
    </citation>
    <scope>NUCLEOTIDE SEQUENCE [LARGE SCALE GENOMIC DNA]</scope>
    <source>
        <strain>YX</strain>
    </source>
</reference>
<keyword id="KW-0488">Methylation</keyword>
<keyword id="KW-0687">Ribonucleoprotein</keyword>
<keyword id="KW-0689">Ribosomal protein</keyword>
<keyword id="KW-0694">RNA-binding</keyword>
<keyword id="KW-0699">rRNA-binding</keyword>
<dbReference type="EMBL" id="CP000088">
    <property type="protein sequence ID" value="AAZ56691.1"/>
    <property type="molecule type" value="Genomic_DNA"/>
</dbReference>
<dbReference type="RefSeq" id="WP_011293081.1">
    <property type="nucleotide sequence ID" value="NC_007333.1"/>
</dbReference>
<dbReference type="SMR" id="Q47LI1"/>
<dbReference type="STRING" id="269800.Tfu_2658"/>
<dbReference type="KEGG" id="tfu:Tfu_2658"/>
<dbReference type="eggNOG" id="COG0080">
    <property type="taxonomic scope" value="Bacteria"/>
</dbReference>
<dbReference type="HOGENOM" id="CLU_074237_2_1_11"/>
<dbReference type="OrthoDB" id="9802408at2"/>
<dbReference type="GO" id="GO:0022625">
    <property type="term" value="C:cytosolic large ribosomal subunit"/>
    <property type="evidence" value="ECO:0007669"/>
    <property type="project" value="TreeGrafter"/>
</dbReference>
<dbReference type="GO" id="GO:0070180">
    <property type="term" value="F:large ribosomal subunit rRNA binding"/>
    <property type="evidence" value="ECO:0007669"/>
    <property type="project" value="UniProtKB-UniRule"/>
</dbReference>
<dbReference type="GO" id="GO:0003735">
    <property type="term" value="F:structural constituent of ribosome"/>
    <property type="evidence" value="ECO:0007669"/>
    <property type="project" value="InterPro"/>
</dbReference>
<dbReference type="GO" id="GO:0006412">
    <property type="term" value="P:translation"/>
    <property type="evidence" value="ECO:0007669"/>
    <property type="project" value="UniProtKB-UniRule"/>
</dbReference>
<dbReference type="CDD" id="cd00349">
    <property type="entry name" value="Ribosomal_L11"/>
    <property type="match status" value="1"/>
</dbReference>
<dbReference type="FunFam" id="1.10.10.250:FF:000001">
    <property type="entry name" value="50S ribosomal protein L11"/>
    <property type="match status" value="1"/>
</dbReference>
<dbReference type="FunFam" id="3.30.1550.10:FF:000001">
    <property type="entry name" value="50S ribosomal protein L11"/>
    <property type="match status" value="1"/>
</dbReference>
<dbReference type="Gene3D" id="1.10.10.250">
    <property type="entry name" value="Ribosomal protein L11, C-terminal domain"/>
    <property type="match status" value="1"/>
</dbReference>
<dbReference type="Gene3D" id="3.30.1550.10">
    <property type="entry name" value="Ribosomal protein L11/L12, N-terminal domain"/>
    <property type="match status" value="1"/>
</dbReference>
<dbReference type="HAMAP" id="MF_00736">
    <property type="entry name" value="Ribosomal_uL11"/>
    <property type="match status" value="1"/>
</dbReference>
<dbReference type="InterPro" id="IPR000911">
    <property type="entry name" value="Ribosomal_uL11"/>
</dbReference>
<dbReference type="InterPro" id="IPR006519">
    <property type="entry name" value="Ribosomal_uL11_bac-typ"/>
</dbReference>
<dbReference type="InterPro" id="IPR020783">
    <property type="entry name" value="Ribosomal_uL11_C"/>
</dbReference>
<dbReference type="InterPro" id="IPR036769">
    <property type="entry name" value="Ribosomal_uL11_C_sf"/>
</dbReference>
<dbReference type="InterPro" id="IPR020784">
    <property type="entry name" value="Ribosomal_uL11_N"/>
</dbReference>
<dbReference type="InterPro" id="IPR036796">
    <property type="entry name" value="Ribosomal_uL11_N_sf"/>
</dbReference>
<dbReference type="NCBIfam" id="TIGR01632">
    <property type="entry name" value="L11_bact"/>
    <property type="match status" value="1"/>
</dbReference>
<dbReference type="PANTHER" id="PTHR11661">
    <property type="entry name" value="60S RIBOSOMAL PROTEIN L12"/>
    <property type="match status" value="1"/>
</dbReference>
<dbReference type="PANTHER" id="PTHR11661:SF1">
    <property type="entry name" value="LARGE RIBOSOMAL SUBUNIT PROTEIN UL11M"/>
    <property type="match status" value="1"/>
</dbReference>
<dbReference type="Pfam" id="PF00298">
    <property type="entry name" value="Ribosomal_L11"/>
    <property type="match status" value="1"/>
</dbReference>
<dbReference type="Pfam" id="PF03946">
    <property type="entry name" value="Ribosomal_L11_N"/>
    <property type="match status" value="1"/>
</dbReference>
<dbReference type="SMART" id="SM00649">
    <property type="entry name" value="RL11"/>
    <property type="match status" value="1"/>
</dbReference>
<dbReference type="SUPFAM" id="SSF54747">
    <property type="entry name" value="Ribosomal L11/L12e N-terminal domain"/>
    <property type="match status" value="1"/>
</dbReference>
<dbReference type="SUPFAM" id="SSF46906">
    <property type="entry name" value="Ribosomal protein L11, C-terminal domain"/>
    <property type="match status" value="1"/>
</dbReference>
<protein>
    <recommendedName>
        <fullName evidence="1">Large ribosomal subunit protein uL11</fullName>
    </recommendedName>
    <alternativeName>
        <fullName evidence="2">50S ribosomal protein L11</fullName>
    </alternativeName>
</protein>
<name>RL11_THEFY</name>
<evidence type="ECO:0000255" key="1">
    <source>
        <dbReference type="HAMAP-Rule" id="MF_00736"/>
    </source>
</evidence>
<evidence type="ECO:0000305" key="2"/>
<gene>
    <name evidence="1" type="primary">rplK</name>
    <name type="ordered locus">Tfu_2658</name>
</gene>